<comment type="function">
    <text evidence="1">Synthesizes alpha-1,4-glucan chains using ADP-glucose.</text>
</comment>
<comment type="catalytic activity">
    <reaction evidence="1">
        <text>[(1-&gt;4)-alpha-D-glucosyl](n) + ADP-alpha-D-glucose = [(1-&gt;4)-alpha-D-glucosyl](n+1) + ADP + H(+)</text>
        <dbReference type="Rhea" id="RHEA:18189"/>
        <dbReference type="Rhea" id="RHEA-COMP:9584"/>
        <dbReference type="Rhea" id="RHEA-COMP:9587"/>
        <dbReference type="ChEBI" id="CHEBI:15378"/>
        <dbReference type="ChEBI" id="CHEBI:15444"/>
        <dbReference type="ChEBI" id="CHEBI:57498"/>
        <dbReference type="ChEBI" id="CHEBI:456216"/>
        <dbReference type="EC" id="2.4.1.21"/>
    </reaction>
</comment>
<comment type="pathway">
    <text evidence="1">Glycan biosynthesis; glycogen biosynthesis.</text>
</comment>
<comment type="similarity">
    <text evidence="1">Belongs to the glycosyltransferase 1 family. Bacterial/plant glycogen synthase subfamily.</text>
</comment>
<accession>Q7U7I2</accession>
<keyword id="KW-0320">Glycogen biosynthesis</keyword>
<keyword id="KW-0328">Glycosyltransferase</keyword>
<keyword id="KW-0808">Transferase</keyword>
<organism>
    <name type="scientific">Parasynechococcus marenigrum (strain WH8102)</name>
    <dbReference type="NCBI Taxonomy" id="84588"/>
    <lineage>
        <taxon>Bacteria</taxon>
        <taxon>Bacillati</taxon>
        <taxon>Cyanobacteriota</taxon>
        <taxon>Cyanophyceae</taxon>
        <taxon>Synechococcales</taxon>
        <taxon>Prochlorococcaceae</taxon>
        <taxon>Parasynechococcus</taxon>
        <taxon>Parasynechococcus marenigrum</taxon>
    </lineage>
</organism>
<name>GLGA_PARMW</name>
<feature type="chain" id="PRO_0000188654" description="Glycogen synthase">
    <location>
        <begin position="1"/>
        <end position="513"/>
    </location>
</feature>
<feature type="region of interest" description="Disordered" evidence="2">
    <location>
        <begin position="470"/>
        <end position="513"/>
    </location>
</feature>
<feature type="binding site" evidence="1">
    <location>
        <position position="15"/>
    </location>
    <ligand>
        <name>ADP-alpha-D-glucose</name>
        <dbReference type="ChEBI" id="CHEBI:57498"/>
    </ligand>
</feature>
<reference key="1">
    <citation type="journal article" date="2003" name="Nature">
        <title>The genome of a motile marine Synechococcus.</title>
        <authorList>
            <person name="Palenik B."/>
            <person name="Brahamsha B."/>
            <person name="Larimer F.W."/>
            <person name="Land M.L."/>
            <person name="Hauser L."/>
            <person name="Chain P."/>
            <person name="Lamerdin J.E."/>
            <person name="Regala W."/>
            <person name="Allen E.E."/>
            <person name="McCarren J."/>
            <person name="Paulsen I.T."/>
            <person name="Dufresne A."/>
            <person name="Partensky F."/>
            <person name="Webb E.A."/>
            <person name="Waterbury J."/>
        </authorList>
    </citation>
    <scope>NUCLEOTIDE SEQUENCE [LARGE SCALE GENOMIC DNA]</scope>
    <source>
        <strain>WH8102</strain>
    </source>
</reference>
<sequence length="513" mass="57389">MRILFAAAECAPMIKVGGMGDVVGSLPPALAKLGHDVRLIMPGYSKLWTKLTISDEPIWRAQTMGTEFAVYETKHPGNGMTIYLVGHPVFDPERIYGGEDEDWRFTFFASAAAEFAWNVWKPNVLHCHDWHTGMIPVWMHQDPEISTVFTIHNLKYQGPWRWKLDRITWCPWYMQGDHTMAAALLYADRVNAVSPTYAEEIRTAEYGEKLDGLLNFVSGKLRGILNGIDLEAWNPQTDGALPATFSADDLSGKAVCKRVLQERMGLEVRDDAFVLGMVSRLVDQKGVDLLLQVADRLLAYTDTQIVVLGTGDRGLESGLWQLASRHAGRCAVFLTYDDDLSRLIYAGSDAFLMPSRFEPCGISQLYAMRYGSVPVVRKVGGLVDTVPPHSPADASGTGFCFDRFEPVDFYTALVRAWEAYRHRDSWQELQKRGMQQDYSWDRSAIDYDVMYRDVCGLKEPTPDAAMVEQFSQGQAADPSRPEDDAINAAPEAVTAPSGPSRNPLNRLFGRRAD</sequence>
<proteinExistence type="inferred from homology"/>
<dbReference type="EC" id="2.4.1.21" evidence="1"/>
<dbReference type="EMBL" id="BX569691">
    <property type="protein sequence ID" value="CAE07515.1"/>
    <property type="molecule type" value="Genomic_DNA"/>
</dbReference>
<dbReference type="RefSeq" id="WP_011127865.1">
    <property type="nucleotide sequence ID" value="NC_005070.1"/>
</dbReference>
<dbReference type="SMR" id="Q7U7I2"/>
<dbReference type="STRING" id="84588.SYNW1000"/>
<dbReference type="CAZy" id="GT5">
    <property type="family name" value="Glycosyltransferase Family 5"/>
</dbReference>
<dbReference type="KEGG" id="syw:SYNW1000"/>
<dbReference type="eggNOG" id="COG0297">
    <property type="taxonomic scope" value="Bacteria"/>
</dbReference>
<dbReference type="HOGENOM" id="CLU_009583_18_2_3"/>
<dbReference type="UniPathway" id="UPA00164"/>
<dbReference type="Proteomes" id="UP000001422">
    <property type="component" value="Chromosome"/>
</dbReference>
<dbReference type="GO" id="GO:0009011">
    <property type="term" value="F:alpha-1,4-glucan glucosyltransferase (ADP-glucose donor) activity"/>
    <property type="evidence" value="ECO:0007669"/>
    <property type="project" value="UniProtKB-UniRule"/>
</dbReference>
<dbReference type="GO" id="GO:0004373">
    <property type="term" value="F:alpha-1,4-glucan glucosyltransferase (UDP-glucose donor) activity"/>
    <property type="evidence" value="ECO:0007669"/>
    <property type="project" value="InterPro"/>
</dbReference>
<dbReference type="GO" id="GO:0005978">
    <property type="term" value="P:glycogen biosynthetic process"/>
    <property type="evidence" value="ECO:0007669"/>
    <property type="project" value="UniProtKB-UniRule"/>
</dbReference>
<dbReference type="CDD" id="cd03791">
    <property type="entry name" value="GT5_Glycogen_synthase_DULL1-like"/>
    <property type="match status" value="1"/>
</dbReference>
<dbReference type="Gene3D" id="3.40.50.2000">
    <property type="entry name" value="Glycogen Phosphorylase B"/>
    <property type="match status" value="2"/>
</dbReference>
<dbReference type="HAMAP" id="MF_00484">
    <property type="entry name" value="Glycogen_synth"/>
    <property type="match status" value="1"/>
</dbReference>
<dbReference type="InterPro" id="IPR001296">
    <property type="entry name" value="Glyco_trans_1"/>
</dbReference>
<dbReference type="InterPro" id="IPR011835">
    <property type="entry name" value="GS/SS"/>
</dbReference>
<dbReference type="InterPro" id="IPR013534">
    <property type="entry name" value="Starch_synth_cat_dom"/>
</dbReference>
<dbReference type="NCBIfam" id="TIGR02095">
    <property type="entry name" value="glgA"/>
    <property type="match status" value="1"/>
</dbReference>
<dbReference type="NCBIfam" id="NF001900">
    <property type="entry name" value="PRK00654.1-3"/>
    <property type="match status" value="1"/>
</dbReference>
<dbReference type="PANTHER" id="PTHR45825:SF11">
    <property type="entry name" value="ALPHA AMYLASE DOMAIN-CONTAINING PROTEIN"/>
    <property type="match status" value="1"/>
</dbReference>
<dbReference type="PANTHER" id="PTHR45825">
    <property type="entry name" value="GRANULE-BOUND STARCH SYNTHASE 1, CHLOROPLASTIC/AMYLOPLASTIC"/>
    <property type="match status" value="1"/>
</dbReference>
<dbReference type="Pfam" id="PF08323">
    <property type="entry name" value="Glyco_transf_5"/>
    <property type="match status" value="1"/>
</dbReference>
<dbReference type="Pfam" id="PF00534">
    <property type="entry name" value="Glycos_transf_1"/>
    <property type="match status" value="1"/>
</dbReference>
<dbReference type="SUPFAM" id="SSF53756">
    <property type="entry name" value="UDP-Glycosyltransferase/glycogen phosphorylase"/>
    <property type="match status" value="1"/>
</dbReference>
<evidence type="ECO:0000255" key="1">
    <source>
        <dbReference type="HAMAP-Rule" id="MF_00484"/>
    </source>
</evidence>
<evidence type="ECO:0000256" key="2">
    <source>
        <dbReference type="SAM" id="MobiDB-lite"/>
    </source>
</evidence>
<gene>
    <name evidence="1" type="primary">glgA</name>
    <name type="ordered locus">SYNW1000</name>
</gene>
<protein>
    <recommendedName>
        <fullName evidence="1">Glycogen synthase</fullName>
        <ecNumber evidence="1">2.4.1.21</ecNumber>
    </recommendedName>
    <alternativeName>
        <fullName evidence="1">Starch [bacterial glycogen] synthase</fullName>
    </alternativeName>
</protein>